<evidence type="ECO:0000255" key="1">
    <source>
        <dbReference type="HAMAP-Rule" id="MF_00367"/>
    </source>
</evidence>
<evidence type="ECO:0000255" key="2">
    <source>
        <dbReference type="PROSITE-ProRule" id="PRU01050"/>
    </source>
</evidence>
<gene>
    <name evidence="1" type="primary">era</name>
    <name type="ordered locus">CbuK_1730</name>
</gene>
<comment type="function">
    <text evidence="1">An essential GTPase that binds both GDP and GTP, with rapid nucleotide exchange. Plays a role in 16S rRNA processing and 30S ribosomal subunit biogenesis and possibly also in cell cycle regulation and energy metabolism.</text>
</comment>
<comment type="subunit">
    <text evidence="1">Monomer.</text>
</comment>
<comment type="subcellular location">
    <subcellularLocation>
        <location>Cytoplasm</location>
    </subcellularLocation>
    <subcellularLocation>
        <location evidence="1">Cell inner membrane</location>
        <topology evidence="1">Peripheral membrane protein</topology>
    </subcellularLocation>
</comment>
<comment type="similarity">
    <text evidence="1 2">Belongs to the TRAFAC class TrmE-Era-EngA-EngB-Septin-like GTPase superfamily. Era GTPase family.</text>
</comment>
<accession>B6J4J8</accession>
<keyword id="KW-0997">Cell inner membrane</keyword>
<keyword id="KW-1003">Cell membrane</keyword>
<keyword id="KW-0963">Cytoplasm</keyword>
<keyword id="KW-0342">GTP-binding</keyword>
<keyword id="KW-0472">Membrane</keyword>
<keyword id="KW-0547">Nucleotide-binding</keyword>
<keyword id="KW-0690">Ribosome biogenesis</keyword>
<keyword id="KW-0694">RNA-binding</keyword>
<keyword id="KW-0699">rRNA-binding</keyword>
<organism>
    <name type="scientific">Coxiella burnetii (strain CbuK_Q154)</name>
    <name type="common">Coxiella burnetii (strain Q154)</name>
    <dbReference type="NCBI Taxonomy" id="434924"/>
    <lineage>
        <taxon>Bacteria</taxon>
        <taxon>Pseudomonadati</taxon>
        <taxon>Pseudomonadota</taxon>
        <taxon>Gammaproteobacteria</taxon>
        <taxon>Legionellales</taxon>
        <taxon>Coxiellaceae</taxon>
        <taxon>Coxiella</taxon>
    </lineage>
</organism>
<feature type="chain" id="PRO_1000121314" description="GTPase Era">
    <location>
        <begin position="1"/>
        <end position="295"/>
    </location>
</feature>
<feature type="domain" description="Era-type G" evidence="2">
    <location>
        <begin position="5"/>
        <end position="172"/>
    </location>
</feature>
<feature type="domain" description="KH type-2" evidence="1">
    <location>
        <begin position="203"/>
        <end position="279"/>
    </location>
</feature>
<feature type="region of interest" description="G1" evidence="2">
    <location>
        <begin position="13"/>
        <end position="20"/>
    </location>
</feature>
<feature type="region of interest" description="G2" evidence="2">
    <location>
        <begin position="39"/>
        <end position="43"/>
    </location>
</feature>
<feature type="region of interest" description="G3" evidence="2">
    <location>
        <begin position="60"/>
        <end position="63"/>
    </location>
</feature>
<feature type="region of interest" description="G4" evidence="2">
    <location>
        <begin position="121"/>
        <end position="124"/>
    </location>
</feature>
<feature type="region of interest" description="G5" evidence="2">
    <location>
        <begin position="151"/>
        <end position="153"/>
    </location>
</feature>
<feature type="binding site" evidence="1">
    <location>
        <begin position="13"/>
        <end position="20"/>
    </location>
    <ligand>
        <name>GTP</name>
        <dbReference type="ChEBI" id="CHEBI:37565"/>
    </ligand>
</feature>
<feature type="binding site" evidence="1">
    <location>
        <begin position="60"/>
        <end position="64"/>
    </location>
    <ligand>
        <name>GTP</name>
        <dbReference type="ChEBI" id="CHEBI:37565"/>
    </ligand>
</feature>
<feature type="binding site" evidence="1">
    <location>
        <begin position="121"/>
        <end position="124"/>
    </location>
    <ligand>
        <name>GTP</name>
        <dbReference type="ChEBI" id="CHEBI:37565"/>
    </ligand>
</feature>
<name>ERA_COXB1</name>
<sequence>MKPTYCGYAAIIGRPNVGKSTLLNQLLGQKISITSRKPQTTRYQILGVKTFKDIQVIYVDTPGLHAGTERTINRYMNRTARGALRDVDAIVFVIEPHWESQDAWVLDNLKEIETPVFLVINKVDKIKNRAELLPLIEKVSSLYAFQKIIPLSAKTGDQVGTLEQAVHQLMPESPFYFPPEQVTDRSDQFMASEIIREKLMRLLGQEIPYSLAVTLIEFRKEEKIIRISAVIWVEKKSQKGIVIGKGGERLKRVGTNARLDMEKWFGKKVFLQLWVKVKSGWADNERLLRELGFEE</sequence>
<proteinExistence type="inferred from homology"/>
<protein>
    <recommendedName>
        <fullName evidence="1">GTPase Era</fullName>
    </recommendedName>
</protein>
<reference key="1">
    <citation type="journal article" date="2009" name="Infect. Immun.">
        <title>Comparative genomics reveal extensive transposon-mediated genomic plasticity and diversity among potential effector proteins within the genus Coxiella.</title>
        <authorList>
            <person name="Beare P.A."/>
            <person name="Unsworth N."/>
            <person name="Andoh M."/>
            <person name="Voth D.E."/>
            <person name="Omsland A."/>
            <person name="Gilk S.D."/>
            <person name="Williams K.P."/>
            <person name="Sobral B.W."/>
            <person name="Kupko J.J. III"/>
            <person name="Porcella S.F."/>
            <person name="Samuel J.E."/>
            <person name="Heinzen R.A."/>
        </authorList>
    </citation>
    <scope>NUCLEOTIDE SEQUENCE [LARGE SCALE GENOMIC DNA]</scope>
    <source>
        <strain>CbuK_Q154</strain>
    </source>
</reference>
<dbReference type="EMBL" id="CP001020">
    <property type="protein sequence ID" value="ACJ20863.1"/>
    <property type="molecule type" value="Genomic_DNA"/>
</dbReference>
<dbReference type="RefSeq" id="WP_005772033.1">
    <property type="nucleotide sequence ID" value="NC_011528.1"/>
</dbReference>
<dbReference type="SMR" id="B6J4J8"/>
<dbReference type="KEGG" id="cbc:CbuK_1730"/>
<dbReference type="HOGENOM" id="CLU_038009_1_2_6"/>
<dbReference type="GO" id="GO:0005829">
    <property type="term" value="C:cytosol"/>
    <property type="evidence" value="ECO:0007669"/>
    <property type="project" value="TreeGrafter"/>
</dbReference>
<dbReference type="GO" id="GO:0005886">
    <property type="term" value="C:plasma membrane"/>
    <property type="evidence" value="ECO:0007669"/>
    <property type="project" value="UniProtKB-SubCell"/>
</dbReference>
<dbReference type="GO" id="GO:0005525">
    <property type="term" value="F:GTP binding"/>
    <property type="evidence" value="ECO:0007669"/>
    <property type="project" value="UniProtKB-UniRule"/>
</dbReference>
<dbReference type="GO" id="GO:0003924">
    <property type="term" value="F:GTPase activity"/>
    <property type="evidence" value="ECO:0007669"/>
    <property type="project" value="UniProtKB-UniRule"/>
</dbReference>
<dbReference type="GO" id="GO:0043024">
    <property type="term" value="F:ribosomal small subunit binding"/>
    <property type="evidence" value="ECO:0007669"/>
    <property type="project" value="TreeGrafter"/>
</dbReference>
<dbReference type="GO" id="GO:0070181">
    <property type="term" value="F:small ribosomal subunit rRNA binding"/>
    <property type="evidence" value="ECO:0007669"/>
    <property type="project" value="UniProtKB-UniRule"/>
</dbReference>
<dbReference type="GO" id="GO:0000028">
    <property type="term" value="P:ribosomal small subunit assembly"/>
    <property type="evidence" value="ECO:0007669"/>
    <property type="project" value="TreeGrafter"/>
</dbReference>
<dbReference type="CDD" id="cd04163">
    <property type="entry name" value="Era"/>
    <property type="match status" value="1"/>
</dbReference>
<dbReference type="CDD" id="cd22534">
    <property type="entry name" value="KH-II_Era"/>
    <property type="match status" value="1"/>
</dbReference>
<dbReference type="FunFam" id="3.30.300.20:FF:000003">
    <property type="entry name" value="GTPase Era"/>
    <property type="match status" value="1"/>
</dbReference>
<dbReference type="FunFam" id="3.40.50.300:FF:000094">
    <property type="entry name" value="GTPase Era"/>
    <property type="match status" value="1"/>
</dbReference>
<dbReference type="Gene3D" id="3.30.300.20">
    <property type="match status" value="1"/>
</dbReference>
<dbReference type="Gene3D" id="3.40.50.300">
    <property type="entry name" value="P-loop containing nucleotide triphosphate hydrolases"/>
    <property type="match status" value="1"/>
</dbReference>
<dbReference type="HAMAP" id="MF_00367">
    <property type="entry name" value="GTPase_Era"/>
    <property type="match status" value="1"/>
</dbReference>
<dbReference type="InterPro" id="IPR030388">
    <property type="entry name" value="G_ERA_dom"/>
</dbReference>
<dbReference type="InterPro" id="IPR006073">
    <property type="entry name" value="GTP-bd"/>
</dbReference>
<dbReference type="InterPro" id="IPR005662">
    <property type="entry name" value="GTPase_Era-like"/>
</dbReference>
<dbReference type="InterPro" id="IPR015946">
    <property type="entry name" value="KH_dom-like_a/b"/>
</dbReference>
<dbReference type="InterPro" id="IPR004044">
    <property type="entry name" value="KH_dom_type_2"/>
</dbReference>
<dbReference type="InterPro" id="IPR009019">
    <property type="entry name" value="KH_sf_prok-type"/>
</dbReference>
<dbReference type="InterPro" id="IPR027417">
    <property type="entry name" value="P-loop_NTPase"/>
</dbReference>
<dbReference type="InterPro" id="IPR005225">
    <property type="entry name" value="Small_GTP-bd"/>
</dbReference>
<dbReference type="NCBIfam" id="TIGR00436">
    <property type="entry name" value="era"/>
    <property type="match status" value="1"/>
</dbReference>
<dbReference type="NCBIfam" id="NF000908">
    <property type="entry name" value="PRK00089.1"/>
    <property type="match status" value="1"/>
</dbReference>
<dbReference type="NCBIfam" id="TIGR00231">
    <property type="entry name" value="small_GTP"/>
    <property type="match status" value="1"/>
</dbReference>
<dbReference type="PANTHER" id="PTHR42698">
    <property type="entry name" value="GTPASE ERA"/>
    <property type="match status" value="1"/>
</dbReference>
<dbReference type="PANTHER" id="PTHR42698:SF1">
    <property type="entry name" value="GTPASE ERA, MITOCHONDRIAL"/>
    <property type="match status" value="1"/>
</dbReference>
<dbReference type="Pfam" id="PF07650">
    <property type="entry name" value="KH_2"/>
    <property type="match status" value="1"/>
</dbReference>
<dbReference type="Pfam" id="PF01926">
    <property type="entry name" value="MMR_HSR1"/>
    <property type="match status" value="1"/>
</dbReference>
<dbReference type="PRINTS" id="PR00326">
    <property type="entry name" value="GTP1OBG"/>
</dbReference>
<dbReference type="SUPFAM" id="SSF52540">
    <property type="entry name" value="P-loop containing nucleoside triphosphate hydrolases"/>
    <property type="match status" value="1"/>
</dbReference>
<dbReference type="SUPFAM" id="SSF54814">
    <property type="entry name" value="Prokaryotic type KH domain (KH-domain type II)"/>
    <property type="match status" value="1"/>
</dbReference>
<dbReference type="PROSITE" id="PS51713">
    <property type="entry name" value="G_ERA"/>
    <property type="match status" value="1"/>
</dbReference>
<dbReference type="PROSITE" id="PS50823">
    <property type="entry name" value="KH_TYPE_2"/>
    <property type="match status" value="1"/>
</dbReference>